<reference key="1">
    <citation type="journal article" date="2003" name="J. Bacteriol.">
        <title>Complete genome sequence of the ammonia-oxidizing bacterium and obligate chemolithoautotroph Nitrosomonas europaea.</title>
        <authorList>
            <person name="Chain P."/>
            <person name="Lamerdin J.E."/>
            <person name="Larimer F.W."/>
            <person name="Regala W."/>
            <person name="Lao V."/>
            <person name="Land M.L."/>
            <person name="Hauser L."/>
            <person name="Hooper A.B."/>
            <person name="Klotz M.G."/>
            <person name="Norton J."/>
            <person name="Sayavedra-Soto L.A."/>
            <person name="Arciero D.M."/>
            <person name="Hommes N.G."/>
            <person name="Whittaker M.M."/>
            <person name="Arp D.J."/>
        </authorList>
    </citation>
    <scope>NUCLEOTIDE SEQUENCE [LARGE SCALE GENOMIC DNA]</scope>
    <source>
        <strain>ATCC 19718 / CIP 103999 / KCTC 2705 / NBRC 14298</strain>
    </source>
</reference>
<sequence>MGLAKRIIPCLDIKDGRVVKGVNFVSLRDAGDPVEIARSYNEQGADELVFLDITASSENRDLILHIVEKVAAQVFIPLTVGGGVRKAEDVRRLLNAGADKVSINTSAVLNPMLIKESADHYGSQCIVIAIDARQIPDANPESPRWEVFTHGGRKPTGIDAIEWAQKIQALGAGEILLTSMDRDGTRSGFDLTLTRAISDSVDLPVIASGGVGHLDHLVEGILAGHADAVLAASIFHYGEYSILQAKQYLSSHGIEVRL</sequence>
<name>HIS6_NITEU</name>
<gene>
    <name evidence="1" type="primary">hisF</name>
    <name type="ordered locus">NE0643</name>
</gene>
<accession>Q820Q0</accession>
<comment type="function">
    <text evidence="1">IGPS catalyzes the conversion of PRFAR and glutamine to IGP, AICAR and glutamate. The HisF subunit catalyzes the cyclization activity that produces IGP and AICAR from PRFAR using the ammonia provided by the HisH subunit.</text>
</comment>
<comment type="catalytic activity">
    <reaction evidence="1">
        <text>5-[(5-phospho-1-deoxy-D-ribulos-1-ylimino)methylamino]-1-(5-phospho-beta-D-ribosyl)imidazole-4-carboxamide + L-glutamine = D-erythro-1-(imidazol-4-yl)glycerol 3-phosphate + 5-amino-1-(5-phospho-beta-D-ribosyl)imidazole-4-carboxamide + L-glutamate + H(+)</text>
        <dbReference type="Rhea" id="RHEA:24793"/>
        <dbReference type="ChEBI" id="CHEBI:15378"/>
        <dbReference type="ChEBI" id="CHEBI:29985"/>
        <dbReference type="ChEBI" id="CHEBI:58278"/>
        <dbReference type="ChEBI" id="CHEBI:58359"/>
        <dbReference type="ChEBI" id="CHEBI:58475"/>
        <dbReference type="ChEBI" id="CHEBI:58525"/>
        <dbReference type="EC" id="4.3.2.10"/>
    </reaction>
</comment>
<comment type="pathway">
    <text evidence="1">Amino-acid biosynthesis; L-histidine biosynthesis; L-histidine from 5-phospho-alpha-D-ribose 1-diphosphate: step 5/9.</text>
</comment>
<comment type="subunit">
    <text evidence="1">Heterodimer of HisH and HisF.</text>
</comment>
<comment type="subcellular location">
    <subcellularLocation>
        <location evidence="1">Cytoplasm</location>
    </subcellularLocation>
</comment>
<comment type="similarity">
    <text evidence="1">Belongs to the HisA/HisF family.</text>
</comment>
<organism>
    <name type="scientific">Nitrosomonas europaea (strain ATCC 19718 / CIP 103999 / KCTC 2705 / NBRC 14298)</name>
    <dbReference type="NCBI Taxonomy" id="228410"/>
    <lineage>
        <taxon>Bacteria</taxon>
        <taxon>Pseudomonadati</taxon>
        <taxon>Pseudomonadota</taxon>
        <taxon>Betaproteobacteria</taxon>
        <taxon>Nitrosomonadales</taxon>
        <taxon>Nitrosomonadaceae</taxon>
        <taxon>Nitrosomonas</taxon>
    </lineage>
</organism>
<feature type="chain" id="PRO_0000142191" description="Imidazole glycerol phosphate synthase subunit HisF">
    <location>
        <begin position="1"/>
        <end position="258"/>
    </location>
</feature>
<feature type="active site" evidence="1">
    <location>
        <position position="12"/>
    </location>
</feature>
<feature type="active site" evidence="1">
    <location>
        <position position="131"/>
    </location>
</feature>
<proteinExistence type="inferred from homology"/>
<evidence type="ECO:0000255" key="1">
    <source>
        <dbReference type="HAMAP-Rule" id="MF_01013"/>
    </source>
</evidence>
<keyword id="KW-0028">Amino-acid biosynthesis</keyword>
<keyword id="KW-0963">Cytoplasm</keyword>
<keyword id="KW-0368">Histidine biosynthesis</keyword>
<keyword id="KW-0456">Lyase</keyword>
<keyword id="KW-1185">Reference proteome</keyword>
<dbReference type="EC" id="4.3.2.10" evidence="1"/>
<dbReference type="EMBL" id="AL954747">
    <property type="protein sequence ID" value="CAD84554.1"/>
    <property type="molecule type" value="Genomic_DNA"/>
</dbReference>
<dbReference type="RefSeq" id="WP_011111266.1">
    <property type="nucleotide sequence ID" value="NC_004757.1"/>
</dbReference>
<dbReference type="SMR" id="Q820Q0"/>
<dbReference type="STRING" id="228410.NE0643"/>
<dbReference type="GeneID" id="87103840"/>
<dbReference type="KEGG" id="neu:NE0643"/>
<dbReference type="eggNOG" id="COG0107">
    <property type="taxonomic scope" value="Bacteria"/>
</dbReference>
<dbReference type="HOGENOM" id="CLU_048577_4_0_4"/>
<dbReference type="OrthoDB" id="9781903at2"/>
<dbReference type="PhylomeDB" id="Q820Q0"/>
<dbReference type="UniPathway" id="UPA00031">
    <property type="reaction ID" value="UER00010"/>
</dbReference>
<dbReference type="Proteomes" id="UP000001416">
    <property type="component" value="Chromosome"/>
</dbReference>
<dbReference type="GO" id="GO:0005737">
    <property type="term" value="C:cytoplasm"/>
    <property type="evidence" value="ECO:0007669"/>
    <property type="project" value="UniProtKB-SubCell"/>
</dbReference>
<dbReference type="GO" id="GO:0000107">
    <property type="term" value="F:imidazoleglycerol-phosphate synthase activity"/>
    <property type="evidence" value="ECO:0007669"/>
    <property type="project" value="UniProtKB-UniRule"/>
</dbReference>
<dbReference type="GO" id="GO:0016829">
    <property type="term" value="F:lyase activity"/>
    <property type="evidence" value="ECO:0007669"/>
    <property type="project" value="UniProtKB-KW"/>
</dbReference>
<dbReference type="GO" id="GO:0000105">
    <property type="term" value="P:L-histidine biosynthetic process"/>
    <property type="evidence" value="ECO:0007669"/>
    <property type="project" value="UniProtKB-UniRule"/>
</dbReference>
<dbReference type="CDD" id="cd04731">
    <property type="entry name" value="HisF"/>
    <property type="match status" value="1"/>
</dbReference>
<dbReference type="FunFam" id="3.20.20.70:FF:000006">
    <property type="entry name" value="Imidazole glycerol phosphate synthase subunit HisF"/>
    <property type="match status" value="1"/>
</dbReference>
<dbReference type="Gene3D" id="3.20.20.70">
    <property type="entry name" value="Aldolase class I"/>
    <property type="match status" value="1"/>
</dbReference>
<dbReference type="HAMAP" id="MF_01013">
    <property type="entry name" value="HisF"/>
    <property type="match status" value="1"/>
</dbReference>
<dbReference type="InterPro" id="IPR013785">
    <property type="entry name" value="Aldolase_TIM"/>
</dbReference>
<dbReference type="InterPro" id="IPR006062">
    <property type="entry name" value="His_biosynth"/>
</dbReference>
<dbReference type="InterPro" id="IPR004651">
    <property type="entry name" value="HisF"/>
</dbReference>
<dbReference type="InterPro" id="IPR050064">
    <property type="entry name" value="IGPS_HisA/HisF"/>
</dbReference>
<dbReference type="InterPro" id="IPR011060">
    <property type="entry name" value="RibuloseP-bd_barrel"/>
</dbReference>
<dbReference type="NCBIfam" id="TIGR00735">
    <property type="entry name" value="hisF"/>
    <property type="match status" value="1"/>
</dbReference>
<dbReference type="PANTHER" id="PTHR21235:SF2">
    <property type="entry name" value="IMIDAZOLE GLYCEROL PHOSPHATE SYNTHASE HISHF"/>
    <property type="match status" value="1"/>
</dbReference>
<dbReference type="PANTHER" id="PTHR21235">
    <property type="entry name" value="IMIDAZOLE GLYCEROL PHOSPHATE SYNTHASE SUBUNIT HISF/H IGP SYNTHASE SUBUNIT HISF/H"/>
    <property type="match status" value="1"/>
</dbReference>
<dbReference type="Pfam" id="PF00977">
    <property type="entry name" value="His_biosynth"/>
    <property type="match status" value="1"/>
</dbReference>
<dbReference type="SUPFAM" id="SSF51366">
    <property type="entry name" value="Ribulose-phoshate binding barrel"/>
    <property type="match status" value="1"/>
</dbReference>
<protein>
    <recommendedName>
        <fullName evidence="1">Imidazole glycerol phosphate synthase subunit HisF</fullName>
        <ecNumber evidence="1">4.3.2.10</ecNumber>
    </recommendedName>
    <alternativeName>
        <fullName evidence="1">IGP synthase cyclase subunit</fullName>
    </alternativeName>
    <alternativeName>
        <fullName evidence="1">IGP synthase subunit HisF</fullName>
    </alternativeName>
    <alternativeName>
        <fullName evidence="1">ImGP synthase subunit HisF</fullName>
        <shortName evidence="1">IGPS subunit HisF</shortName>
    </alternativeName>
</protein>